<accession>Q31CL1</accession>
<feature type="chain" id="PRO_1000025958" description="Photosystem II reaction center protein M">
    <location>
        <begin position="1"/>
        <end position="50"/>
    </location>
</feature>
<feature type="transmembrane region" description="Helical" evidence="1">
    <location>
        <begin position="7"/>
        <end position="27"/>
    </location>
</feature>
<comment type="function">
    <text evidence="1">One of the components of the core complex of photosystem II (PSII). PSII is a light-driven water:plastoquinone oxidoreductase that uses light energy to abstract electrons from H(2)O, generating O(2) and a proton gradient subsequently used for ATP formation. It consists of a core antenna complex that captures photons, and an electron transfer chain that converts photonic excitation into a charge separation. This subunit is found at the monomer-monomer interface.</text>
</comment>
<comment type="subunit">
    <text evidence="2">PSII is composed of 1 copy each of membrane proteins PsbA, PsbB, PsbC, PsbD, PsbE, PsbF, PsbH, PsbI, PsbJ, PsbK, PsbL, PsbM, PsbT, PsbX, PsbY, Psb30/Ycf12, peripheral proteins PsbO, CyanoQ (PsbQ), PsbU, PsbV and a large number of cofactors. It forms dimeric complexes.</text>
</comment>
<comment type="subcellular location">
    <subcellularLocation>
        <location evidence="1">Cellular thylakoid membrane</location>
        <topology evidence="1">Single-pass membrane protein</topology>
    </subcellularLocation>
</comment>
<comment type="similarity">
    <text evidence="1">Belongs to the PsbM family.</text>
</comment>
<proteinExistence type="inferred from homology"/>
<sequence>METTNFGFIASLLFVGVPTIFLIGLFISTQDGEKSSFFSDSSKGKLGPKR</sequence>
<dbReference type="EMBL" id="CP000111">
    <property type="protein sequence ID" value="ABB49384.1"/>
    <property type="molecule type" value="Genomic_DNA"/>
</dbReference>
<dbReference type="RefSeq" id="WP_011375884.1">
    <property type="nucleotide sequence ID" value="NC_007577.1"/>
</dbReference>
<dbReference type="SMR" id="Q31CL1"/>
<dbReference type="STRING" id="74546.PMT9312_0323"/>
<dbReference type="KEGG" id="pmi:PMT9312_0323"/>
<dbReference type="eggNOG" id="ENOG5030KVU">
    <property type="taxonomic scope" value="Bacteria"/>
</dbReference>
<dbReference type="HOGENOM" id="CLU_215415_0_0_3"/>
<dbReference type="OrthoDB" id="532820at2"/>
<dbReference type="Proteomes" id="UP000002715">
    <property type="component" value="Chromosome"/>
</dbReference>
<dbReference type="GO" id="GO:0009523">
    <property type="term" value="C:photosystem II"/>
    <property type="evidence" value="ECO:0007669"/>
    <property type="project" value="UniProtKB-KW"/>
</dbReference>
<dbReference type="GO" id="GO:0031676">
    <property type="term" value="C:plasma membrane-derived thylakoid membrane"/>
    <property type="evidence" value="ECO:0007669"/>
    <property type="project" value="UniProtKB-SubCell"/>
</dbReference>
<dbReference type="GO" id="GO:0019684">
    <property type="term" value="P:photosynthesis, light reaction"/>
    <property type="evidence" value="ECO:0007669"/>
    <property type="project" value="InterPro"/>
</dbReference>
<dbReference type="HAMAP" id="MF_00438">
    <property type="entry name" value="PSII_PsbM"/>
    <property type="match status" value="1"/>
</dbReference>
<dbReference type="InterPro" id="IPR007826">
    <property type="entry name" value="PSII_PsbM"/>
</dbReference>
<dbReference type="InterPro" id="IPR037269">
    <property type="entry name" value="PSII_PsbM_sf"/>
</dbReference>
<dbReference type="NCBIfam" id="NF010694">
    <property type="entry name" value="PRK14094.1"/>
    <property type="match status" value="1"/>
</dbReference>
<dbReference type="NCBIfam" id="TIGR03038">
    <property type="entry name" value="PS_II_psbM"/>
    <property type="match status" value="1"/>
</dbReference>
<dbReference type="Pfam" id="PF05151">
    <property type="entry name" value="PsbM"/>
    <property type="match status" value="1"/>
</dbReference>
<dbReference type="SUPFAM" id="SSF161033">
    <property type="entry name" value="Photosystem II reaction center protein M, PsbM"/>
    <property type="match status" value="1"/>
</dbReference>
<reference key="1">
    <citation type="journal article" date="2006" name="Science">
        <title>Genomic islands and the ecology and evolution of Prochlorococcus.</title>
        <authorList>
            <person name="Coleman M.L."/>
            <person name="Sullivan M.B."/>
            <person name="Martiny A.C."/>
            <person name="Steglich C."/>
            <person name="Barry K."/>
            <person name="Delong E.F."/>
            <person name="Chisholm S.W."/>
        </authorList>
    </citation>
    <scope>NUCLEOTIDE SEQUENCE [LARGE SCALE GENOMIC DNA]</scope>
    <source>
        <strain>MIT 9312</strain>
    </source>
</reference>
<keyword id="KW-0472">Membrane</keyword>
<keyword id="KW-0602">Photosynthesis</keyword>
<keyword id="KW-0604">Photosystem II</keyword>
<keyword id="KW-0674">Reaction center</keyword>
<keyword id="KW-0793">Thylakoid</keyword>
<keyword id="KW-0812">Transmembrane</keyword>
<keyword id="KW-1133">Transmembrane helix</keyword>
<organism>
    <name type="scientific">Prochlorococcus marinus (strain MIT 9312)</name>
    <dbReference type="NCBI Taxonomy" id="74546"/>
    <lineage>
        <taxon>Bacteria</taxon>
        <taxon>Bacillati</taxon>
        <taxon>Cyanobacteriota</taxon>
        <taxon>Cyanophyceae</taxon>
        <taxon>Synechococcales</taxon>
        <taxon>Prochlorococcaceae</taxon>
        <taxon>Prochlorococcus</taxon>
    </lineage>
</organism>
<name>PSBM_PROM9</name>
<gene>
    <name evidence="1" type="primary">psbM</name>
    <name type="ordered locus">PMT9312_0323</name>
</gene>
<protein>
    <recommendedName>
        <fullName evidence="1">Photosystem II reaction center protein M</fullName>
        <shortName evidence="1">PSII-M</shortName>
    </recommendedName>
</protein>
<evidence type="ECO:0000255" key="1">
    <source>
        <dbReference type="HAMAP-Rule" id="MF_00438"/>
    </source>
</evidence>
<evidence type="ECO:0000305" key="2"/>